<sequence length="101" mass="11595">MHWIFKKEPNISVQQNPTKENVSDVSMIEINNLTALERDEKVETEDINTNVIANTYTVQANVPTAFQTSETNSNTVTNVPKSPELISIQRLERLKNRYTFL</sequence>
<feature type="chain" id="PRO_0000210639" description="Uncharacterized protein MPN_088">
    <location>
        <begin position="1"/>
        <end position="101"/>
    </location>
</feature>
<reference key="1">
    <citation type="journal article" date="1996" name="Nucleic Acids Res.">
        <title>Complete sequence analysis of the genome of the bacterium Mycoplasma pneumoniae.</title>
        <authorList>
            <person name="Himmelreich R."/>
            <person name="Hilbert H."/>
            <person name="Plagens H."/>
            <person name="Pirkl E."/>
            <person name="Li B.-C."/>
            <person name="Herrmann R."/>
        </authorList>
    </citation>
    <scope>NUCLEOTIDE SEQUENCE [LARGE SCALE GENOMIC DNA]</scope>
    <source>
        <strain>ATCC 29342 / M129 / Subtype 1</strain>
    </source>
</reference>
<protein>
    <recommendedName>
        <fullName>Uncharacterized protein MPN_088</fullName>
    </recommendedName>
</protein>
<dbReference type="EMBL" id="U00089">
    <property type="protein sequence ID" value="AAB95714.1"/>
    <property type="molecule type" value="Genomic_DNA"/>
</dbReference>
<dbReference type="PIR" id="S73393">
    <property type="entry name" value="S73393"/>
</dbReference>
<dbReference type="RefSeq" id="NP_109776.1">
    <property type="nucleotide sequence ID" value="NC_000912.1"/>
</dbReference>
<dbReference type="RefSeq" id="WP_010874445.1">
    <property type="nucleotide sequence ID" value="NZ_OU342337.1"/>
</dbReference>
<dbReference type="EnsemblBacteria" id="AAB95714">
    <property type="protein sequence ID" value="AAB95714"/>
    <property type="gene ID" value="MPN_088"/>
</dbReference>
<dbReference type="KEGG" id="mpn:MPN_088"/>
<dbReference type="HOGENOM" id="CLU_179987_0_0_14"/>
<dbReference type="BioCyc" id="MPNE272634:G1GJ3-142-MONOMER"/>
<dbReference type="Proteomes" id="UP000000808">
    <property type="component" value="Chromosome"/>
</dbReference>
<name>Y088_MYCPN</name>
<accession>P75605</accession>
<organism>
    <name type="scientific">Mycoplasma pneumoniae (strain ATCC 29342 / M129 / Subtype 1)</name>
    <name type="common">Mycoplasmoides pneumoniae</name>
    <dbReference type="NCBI Taxonomy" id="272634"/>
    <lineage>
        <taxon>Bacteria</taxon>
        <taxon>Bacillati</taxon>
        <taxon>Mycoplasmatota</taxon>
        <taxon>Mycoplasmoidales</taxon>
        <taxon>Mycoplasmoidaceae</taxon>
        <taxon>Mycoplasmoides</taxon>
    </lineage>
</organism>
<gene>
    <name type="ordered locus">MPN_088</name>
    <name type="ORF">MP067</name>
    <name type="ORF">R02_orf101</name>
</gene>
<keyword id="KW-1185">Reference proteome</keyword>
<proteinExistence type="predicted"/>